<evidence type="ECO:0000255" key="1">
    <source>
        <dbReference type="HAMAP-Rule" id="MF_01697"/>
    </source>
</evidence>
<comment type="function">
    <text evidence="1">Catalyzes the ATP-dependent condensation of GlcN-Ins and L-cysteine to form L-Cys-GlcN-Ins.</text>
</comment>
<comment type="catalytic activity">
    <reaction evidence="1">
        <text>1D-myo-inositol 2-amino-2-deoxy-alpha-D-glucopyranoside + L-cysteine + ATP = 1D-myo-inositol 2-(L-cysteinylamino)-2-deoxy-alpha-D-glucopyranoside + AMP + diphosphate + H(+)</text>
        <dbReference type="Rhea" id="RHEA:26176"/>
        <dbReference type="ChEBI" id="CHEBI:15378"/>
        <dbReference type="ChEBI" id="CHEBI:30616"/>
        <dbReference type="ChEBI" id="CHEBI:33019"/>
        <dbReference type="ChEBI" id="CHEBI:35235"/>
        <dbReference type="ChEBI" id="CHEBI:58886"/>
        <dbReference type="ChEBI" id="CHEBI:58887"/>
        <dbReference type="ChEBI" id="CHEBI:456215"/>
        <dbReference type="EC" id="6.3.1.13"/>
    </reaction>
</comment>
<comment type="cofactor">
    <cofactor evidence="1">
        <name>Zn(2+)</name>
        <dbReference type="ChEBI" id="CHEBI:29105"/>
    </cofactor>
    <text evidence="1">Binds 1 zinc ion per subunit.</text>
</comment>
<comment type="subunit">
    <text evidence="1">Monomer.</text>
</comment>
<comment type="similarity">
    <text evidence="1">Belongs to the class-I aminoacyl-tRNA synthetase family. MshC subfamily.</text>
</comment>
<organism>
    <name type="scientific">Parafrankia sp. (strain EAN1pec)</name>
    <dbReference type="NCBI Taxonomy" id="298653"/>
    <lineage>
        <taxon>Bacteria</taxon>
        <taxon>Bacillati</taxon>
        <taxon>Actinomycetota</taxon>
        <taxon>Actinomycetes</taxon>
        <taxon>Frankiales</taxon>
        <taxon>Frankiaceae</taxon>
        <taxon>Parafrankia</taxon>
    </lineage>
</organism>
<gene>
    <name evidence="1" type="primary">mshC</name>
    <name type="ordered locus">Franean1_4892</name>
</gene>
<proteinExistence type="inferred from homology"/>
<feature type="chain" id="PRO_0000400447" description="L-cysteine:1D-myo-inositol 2-amino-2-deoxy-alpha-D-glucopyranoside ligase">
    <location>
        <begin position="1"/>
        <end position="444"/>
    </location>
</feature>
<feature type="short sequence motif" description="'HIGH' region" evidence="1">
    <location>
        <begin position="68"/>
        <end position="78"/>
    </location>
</feature>
<feature type="short sequence motif" description="'ERGGDP' region" evidence="1">
    <location>
        <begin position="206"/>
        <end position="211"/>
    </location>
</feature>
<feature type="short sequence motif" description="'KMSKS' region" evidence="1">
    <location>
        <begin position="308"/>
        <end position="312"/>
    </location>
</feature>
<feature type="binding site" evidence="1">
    <location>
        <begin position="66"/>
        <end position="69"/>
    </location>
    <ligand>
        <name>L-cysteinyl-5'-AMP</name>
        <dbReference type="ChEBI" id="CHEBI:144924"/>
    </ligand>
</feature>
<feature type="binding site" evidence="1">
    <location>
        <position position="66"/>
    </location>
    <ligand>
        <name>Zn(2+)</name>
        <dbReference type="ChEBI" id="CHEBI:29105"/>
    </ligand>
</feature>
<feature type="binding site" evidence="1">
    <location>
        <position position="81"/>
    </location>
    <ligand>
        <name>L-cysteinyl-5'-AMP</name>
        <dbReference type="ChEBI" id="CHEBI:144924"/>
    </ligand>
</feature>
<feature type="binding site" evidence="1">
    <location>
        <begin position="104"/>
        <end position="106"/>
    </location>
    <ligand>
        <name>L-cysteinyl-5'-AMP</name>
        <dbReference type="ChEBI" id="CHEBI:144924"/>
    </ligand>
</feature>
<feature type="binding site" evidence="1">
    <location>
        <position position="246"/>
    </location>
    <ligand>
        <name>L-cysteinyl-5'-AMP</name>
        <dbReference type="ChEBI" id="CHEBI:144924"/>
    </ligand>
</feature>
<feature type="binding site" evidence="1">
    <location>
        <position position="250"/>
    </location>
    <ligand>
        <name>Zn(2+)</name>
        <dbReference type="ChEBI" id="CHEBI:29105"/>
    </ligand>
</feature>
<feature type="binding site" evidence="1">
    <location>
        <begin position="268"/>
        <end position="270"/>
    </location>
    <ligand>
        <name>L-cysteinyl-5'-AMP</name>
        <dbReference type="ChEBI" id="CHEBI:144924"/>
    </ligand>
</feature>
<feature type="binding site" evidence="1">
    <location>
        <position position="275"/>
    </location>
    <ligand>
        <name>Zn(2+)</name>
        <dbReference type="ChEBI" id="CHEBI:29105"/>
    </ligand>
</feature>
<feature type="binding site" evidence="1">
    <location>
        <position position="302"/>
    </location>
    <ligand>
        <name>L-cysteinyl-5'-AMP</name>
        <dbReference type="ChEBI" id="CHEBI:144924"/>
    </ligand>
</feature>
<name>MSHC_PARS2</name>
<accession>A8LH67</accession>
<keyword id="KW-0067">ATP-binding</keyword>
<keyword id="KW-0436">Ligase</keyword>
<keyword id="KW-0479">Metal-binding</keyword>
<keyword id="KW-0547">Nucleotide-binding</keyword>
<keyword id="KW-0862">Zinc</keyword>
<dbReference type="EC" id="6.3.1.13" evidence="1"/>
<dbReference type="EMBL" id="CP000820">
    <property type="protein sequence ID" value="ABW14257.1"/>
    <property type="molecule type" value="Genomic_DNA"/>
</dbReference>
<dbReference type="SMR" id="A8LH67"/>
<dbReference type="STRING" id="298653.Franean1_4892"/>
<dbReference type="KEGG" id="fre:Franean1_4892"/>
<dbReference type="eggNOG" id="COG0215">
    <property type="taxonomic scope" value="Bacteria"/>
</dbReference>
<dbReference type="HOGENOM" id="CLU_013528_0_0_11"/>
<dbReference type="GO" id="GO:0005829">
    <property type="term" value="C:cytosol"/>
    <property type="evidence" value="ECO:0007669"/>
    <property type="project" value="TreeGrafter"/>
</dbReference>
<dbReference type="GO" id="GO:0005524">
    <property type="term" value="F:ATP binding"/>
    <property type="evidence" value="ECO:0007669"/>
    <property type="project" value="UniProtKB-KW"/>
</dbReference>
<dbReference type="GO" id="GO:0035446">
    <property type="term" value="F:cysteine-glucosaminylinositol ligase activity"/>
    <property type="evidence" value="ECO:0007669"/>
    <property type="project" value="UniProtKB-UniRule"/>
</dbReference>
<dbReference type="GO" id="GO:0004817">
    <property type="term" value="F:cysteine-tRNA ligase activity"/>
    <property type="evidence" value="ECO:0007669"/>
    <property type="project" value="TreeGrafter"/>
</dbReference>
<dbReference type="GO" id="GO:0008270">
    <property type="term" value="F:zinc ion binding"/>
    <property type="evidence" value="ECO:0007669"/>
    <property type="project" value="UniProtKB-UniRule"/>
</dbReference>
<dbReference type="GO" id="GO:0006423">
    <property type="term" value="P:cysteinyl-tRNA aminoacylation"/>
    <property type="evidence" value="ECO:0007669"/>
    <property type="project" value="TreeGrafter"/>
</dbReference>
<dbReference type="GO" id="GO:0010125">
    <property type="term" value="P:mycothiol biosynthetic process"/>
    <property type="evidence" value="ECO:0007669"/>
    <property type="project" value="UniProtKB-UniRule"/>
</dbReference>
<dbReference type="CDD" id="cd00672">
    <property type="entry name" value="CysRS_core"/>
    <property type="match status" value="1"/>
</dbReference>
<dbReference type="FunFam" id="3.40.50.620:FF:000134">
    <property type="entry name" value="L-cysteine:1D-myo-inositol 2-amino-2-deoxy-alpha-D-glucopyranoside ligase"/>
    <property type="match status" value="1"/>
</dbReference>
<dbReference type="Gene3D" id="1.20.120.640">
    <property type="entry name" value="Anticodon-binding domain of a subclass of class I aminoacyl-tRNA synthetases"/>
    <property type="match status" value="1"/>
</dbReference>
<dbReference type="Gene3D" id="3.40.50.620">
    <property type="entry name" value="HUPs"/>
    <property type="match status" value="1"/>
</dbReference>
<dbReference type="HAMAP" id="MF_01697">
    <property type="entry name" value="MshC"/>
    <property type="match status" value="1"/>
</dbReference>
<dbReference type="InterPro" id="IPR024909">
    <property type="entry name" value="Cys-tRNA/MSH_ligase"/>
</dbReference>
<dbReference type="InterPro" id="IPR017812">
    <property type="entry name" value="Mycothiol_ligase_MshC"/>
</dbReference>
<dbReference type="InterPro" id="IPR014729">
    <property type="entry name" value="Rossmann-like_a/b/a_fold"/>
</dbReference>
<dbReference type="InterPro" id="IPR032678">
    <property type="entry name" value="tRNA-synt_1_cat_dom"/>
</dbReference>
<dbReference type="NCBIfam" id="TIGR03447">
    <property type="entry name" value="mycothiol_MshC"/>
    <property type="match status" value="1"/>
</dbReference>
<dbReference type="PANTHER" id="PTHR10890:SF3">
    <property type="entry name" value="CYSTEINE--TRNA LIGASE, CYTOPLASMIC"/>
    <property type="match status" value="1"/>
</dbReference>
<dbReference type="PANTHER" id="PTHR10890">
    <property type="entry name" value="CYSTEINYL-TRNA SYNTHETASE"/>
    <property type="match status" value="1"/>
</dbReference>
<dbReference type="Pfam" id="PF01406">
    <property type="entry name" value="tRNA-synt_1e"/>
    <property type="match status" value="1"/>
</dbReference>
<dbReference type="PRINTS" id="PR00983">
    <property type="entry name" value="TRNASYNTHCYS"/>
</dbReference>
<dbReference type="SUPFAM" id="SSF52374">
    <property type="entry name" value="Nucleotidylyl transferase"/>
    <property type="match status" value="1"/>
</dbReference>
<protein>
    <recommendedName>
        <fullName evidence="1">L-cysteine:1D-myo-inositol 2-amino-2-deoxy-alpha-D-glucopyranoside ligase</fullName>
        <shortName evidence="1">L-Cys:GlcN-Ins ligase</shortName>
        <ecNumber evidence="1">6.3.1.13</ecNumber>
    </recommendedName>
    <alternativeName>
        <fullName evidence="1">Mycothiol ligase</fullName>
        <shortName evidence="1">MSH ligase</shortName>
    </alternativeName>
</protein>
<sequence>MPCSSPACPACPAAGPAPVTLTRMQAWPFPQLPKLPGQGRDLRVLDTAHGGVRTLDLGPTVRLYACGITPYDATHLGHAFTYLTYDLVQRVLRDAGHEVRYVQNVTDVDDPLLERATRDGIDWRDLARREIDLFRADMTALRILPPDHYVGVVEAVGLIVDMVSQLVERGAAYSVDGDLYFSVAAAPDFGQVAHLDPAQMLVSCAEHGGDPGRPGKKDPLDPLLWRAERPGEPSWPSPFGPGRPGWHVECSAIARHYLGATIDIQGGGSDLAFPHHECSAAHAEVANGARPFARAYVHTALVSLDGHKMSKSRGNLEFVSRLLARGADPAAIRLALLQHHHTVEWEWTAAAMPAAAERLDRWRAAVALPSGPDFRPVLAEVRDRLADDLDAPGALAAVDAWAAAALAAGSGGSGEADDQAPATVRDTVDSLLGVDLGPVLPRGT</sequence>
<reference key="1">
    <citation type="journal article" date="2007" name="Genome Res.">
        <title>Genome characteristics of facultatively symbiotic Frankia sp. strains reflect host range and host plant biogeography.</title>
        <authorList>
            <person name="Normand P."/>
            <person name="Lapierre P."/>
            <person name="Tisa L.S."/>
            <person name="Gogarten J.P."/>
            <person name="Alloisio N."/>
            <person name="Bagnarol E."/>
            <person name="Bassi C.A."/>
            <person name="Berry A.M."/>
            <person name="Bickhart D.M."/>
            <person name="Choisne N."/>
            <person name="Couloux A."/>
            <person name="Cournoyer B."/>
            <person name="Cruveiller S."/>
            <person name="Daubin V."/>
            <person name="Demange N."/>
            <person name="Francino M.P."/>
            <person name="Goltsman E."/>
            <person name="Huang Y."/>
            <person name="Kopp O.R."/>
            <person name="Labarre L."/>
            <person name="Lapidus A."/>
            <person name="Lavire C."/>
            <person name="Marechal J."/>
            <person name="Martinez M."/>
            <person name="Mastronunzio J.E."/>
            <person name="Mullin B.C."/>
            <person name="Niemann J."/>
            <person name="Pujic P."/>
            <person name="Rawnsley T."/>
            <person name="Rouy Z."/>
            <person name="Schenowitz C."/>
            <person name="Sellstedt A."/>
            <person name="Tavares F."/>
            <person name="Tomkins J.P."/>
            <person name="Vallenet D."/>
            <person name="Valverde C."/>
            <person name="Wall L.G."/>
            <person name="Wang Y."/>
            <person name="Medigue C."/>
            <person name="Benson D.R."/>
        </authorList>
    </citation>
    <scope>NUCLEOTIDE SEQUENCE [LARGE SCALE GENOMIC DNA]</scope>
    <source>
        <strain>EAN1pec</strain>
    </source>
</reference>